<sequence>MEIPRLLPARGTPQGAGGGGCPAGGGGVHRAPASLACQAPTRRLLLLRGAQDGGPGPRSAEAQRASRGLGPSLNRLAPRPDHRSSGGGRGGGAGGGGGGSGGGGGGGGGGGGGGGGGGSRGGSDDFFLLLLDPVGGDVETVGTEQAGAPVRREEAGAGPRPERRQSAGPPAGRPEPGPRCLSAVPAASPLPAAGPGPAAAAAAAAAAAFAGTITIHNQDLLLRFENGVLTLTTPPLPAWEPGVAPFPQPQPPPQPGALIAPQAAAAGFPPAAAAAAAAAAAGAQLGDCPELPPDLLLAEPAEPAACPAPPEEEAEAPAAAAAQSPRGPAGPGPGPGVVLYLCPEAQCGQTFAKKHQLKVHLLTHSSSQGQRPFKCPLSGCGWTFTTSYKLKRHLQSHDKLRPFGCPVQGCGKSFTTVYNLKAHMKGHEQENSFKCEVCEESFPTQAKLSTHQRSHFEPERPYQCAFSGCKKTFITVSALFSHNRAHFREQELFACSFPGCSKQYDKACRLKIHLRSHTGERPFLCDFDGCGWNFTSMSKLLRHKRKHEDDRRFTCPVEGCGKSFTRAEHLKGHSITHLGTKPFVCPVEGCCARFSARSSLYIHSKKHLQDVGAWKSRCPVPTCNKLFTSKHSMKTHMTKRHNLSQDLLAQLEAANSLTPSSELTSPGQSDLSGAELVSLFSDVPGHGSAAVLDTALVNSGILTIDVASVNSSLAGSLPADNNSNNHSLGQAAEPRALRGAPSDLPQSLDTSLFFGTSVAGYQHSPLDMDDVSAGNVGLFGSLALKNSSLEPQALTPSNKLTVDTEALTPSSTLCENSVSELLTPAKAEWNVHPESDFFGHEEETQFGFSHPTGSHGSQKDTDLITVTGTPFLV</sequence>
<keyword id="KW-0010">Activator</keyword>
<keyword id="KW-0479">Metal-binding</keyword>
<keyword id="KW-0488">Methylation</keyword>
<keyword id="KW-0539">Nucleus</keyword>
<keyword id="KW-1185">Reference proteome</keyword>
<keyword id="KW-0677">Repeat</keyword>
<keyword id="KW-0804">Transcription</keyword>
<keyword id="KW-0805">Transcription regulation</keyword>
<keyword id="KW-0862">Zinc</keyword>
<keyword id="KW-0863">Zinc-finger</keyword>
<gene>
    <name type="primary">Zxdb</name>
</gene>
<feature type="chain" id="PRO_0000292802" description="Zinc finger X-linked protein ZXDB">
    <location>
        <begin position="1"/>
        <end position="873"/>
    </location>
</feature>
<feature type="zinc finger region" description="C2H2-type 1" evidence="2">
    <location>
        <begin position="340"/>
        <end position="364"/>
    </location>
</feature>
<feature type="zinc finger region" description="C2H2-type 2" evidence="2">
    <location>
        <begin position="373"/>
        <end position="397"/>
    </location>
</feature>
<feature type="zinc finger region" description="C2H2-type 3" evidence="2">
    <location>
        <begin position="403"/>
        <end position="427"/>
    </location>
</feature>
<feature type="zinc finger region" description="C2H2-type 4" evidence="2">
    <location>
        <begin position="433"/>
        <end position="455"/>
    </location>
</feature>
<feature type="zinc finger region" description="C2H2-type 5" evidence="2">
    <location>
        <begin position="462"/>
        <end position="486"/>
    </location>
</feature>
<feature type="zinc finger region" description="C2H2-type 6" evidence="2">
    <location>
        <begin position="493"/>
        <end position="517"/>
    </location>
</feature>
<feature type="zinc finger region" description="C2H2-type 7" evidence="2">
    <location>
        <begin position="523"/>
        <end position="547"/>
    </location>
</feature>
<feature type="zinc finger region" description="C2H2-type 8" evidence="2">
    <location>
        <begin position="553"/>
        <end position="577"/>
    </location>
</feature>
<feature type="zinc finger region" description="C2H2-type 9" evidence="2">
    <location>
        <begin position="583"/>
        <end position="607"/>
    </location>
</feature>
<feature type="zinc finger region" description="C2H2-type 10" evidence="2">
    <location>
        <begin position="616"/>
        <end position="641"/>
    </location>
</feature>
<feature type="region of interest" description="Disordered" evidence="3">
    <location>
        <begin position="1"/>
        <end position="23"/>
    </location>
</feature>
<feature type="region of interest" description="Disordered" evidence="3">
    <location>
        <begin position="48"/>
        <end position="120"/>
    </location>
</feature>
<feature type="region of interest" description="Disordered" evidence="3">
    <location>
        <begin position="138"/>
        <end position="184"/>
    </location>
</feature>
<feature type="region of interest" description="Disordered" evidence="3">
    <location>
        <begin position="240"/>
        <end position="259"/>
    </location>
</feature>
<feature type="region of interest" description="Disordered" evidence="3">
    <location>
        <begin position="301"/>
        <end position="330"/>
    </location>
</feature>
<feature type="region of interest" description="Required for interaction with ZXDC" evidence="1">
    <location>
        <begin position="340"/>
        <end position="646"/>
    </location>
</feature>
<feature type="region of interest" description="Required for transcriptional activation" evidence="1">
    <location>
        <begin position="645"/>
        <end position="776"/>
    </location>
</feature>
<feature type="compositionally biased region" description="Gly residues" evidence="3">
    <location>
        <begin position="14"/>
        <end position="23"/>
    </location>
</feature>
<feature type="compositionally biased region" description="Gly residues" evidence="3">
    <location>
        <begin position="85"/>
        <end position="120"/>
    </location>
</feature>
<feature type="compositionally biased region" description="Basic and acidic residues" evidence="3">
    <location>
        <begin position="150"/>
        <end position="165"/>
    </location>
</feature>
<feature type="compositionally biased region" description="Pro residues" evidence="3">
    <location>
        <begin position="240"/>
        <end position="255"/>
    </location>
</feature>
<feature type="compositionally biased region" description="Low complexity" evidence="3">
    <location>
        <begin position="316"/>
        <end position="327"/>
    </location>
</feature>
<feature type="modified residue" description="Omega-N-methylarginine" evidence="5">
    <location>
        <position position="89"/>
    </location>
</feature>
<feature type="sequence conflict" description="In Ref. 2; BAE21123." evidence="4" ref="2">
    <original>AAAAAAAAAA</original>
    <variation>VAGGVVFFVG</variation>
    <location>
        <begin position="271"/>
        <end position="280"/>
    </location>
</feature>
<feature type="sequence conflict" description="In Ref. 2; BAC25496." evidence="4" ref="2">
    <original>P</original>
    <variation>R</variation>
    <location>
        <position position="300"/>
    </location>
</feature>
<feature type="sequence conflict" description="In Ref. 2; BAC25496." evidence="4" ref="2">
    <original>H</original>
    <variation>P</variation>
    <location>
        <position position="631"/>
    </location>
</feature>
<feature type="sequence conflict" description="In Ref. 2; BAC25496." evidence="4" ref="2">
    <original>L</original>
    <variation>F</variation>
    <location>
        <position position="643"/>
    </location>
</feature>
<feature type="sequence conflict" description="In Ref. 2; BAC25496." evidence="4" ref="2">
    <original>L</original>
    <variation>I</variation>
    <location>
        <position position="651"/>
    </location>
</feature>
<feature type="sequence conflict" description="In Ref. 2; BAC25496." evidence="4" ref="2">
    <original>A</original>
    <variation>T</variation>
    <location>
        <position position="689"/>
    </location>
</feature>
<dbReference type="EMBL" id="CR293526">
    <property type="status" value="NOT_ANNOTATED_CDS"/>
    <property type="molecule type" value="Genomic_DNA"/>
</dbReference>
<dbReference type="EMBL" id="AK016708">
    <property type="protein sequence ID" value="BAC25496.1"/>
    <property type="status" value="ALT_FRAME"/>
    <property type="molecule type" value="mRNA"/>
</dbReference>
<dbReference type="EMBL" id="AK132358">
    <property type="protein sequence ID" value="BAE21123.1"/>
    <property type="molecule type" value="mRNA"/>
</dbReference>
<dbReference type="CCDS" id="CCDS41065.1"/>
<dbReference type="RefSeq" id="NP_001074942.1">
    <property type="nucleotide sequence ID" value="NM_001081473.2"/>
</dbReference>
<dbReference type="SMR" id="A2CE44"/>
<dbReference type="BioGRID" id="579966">
    <property type="interactions" value="1"/>
</dbReference>
<dbReference type="FunCoup" id="A2CE44">
    <property type="interactions" value="533"/>
</dbReference>
<dbReference type="STRING" id="10090.ENSMUSP00000100524"/>
<dbReference type="iPTMnet" id="A2CE44"/>
<dbReference type="PhosphoSitePlus" id="A2CE44"/>
<dbReference type="PaxDb" id="10090-ENSMUSP00000100524"/>
<dbReference type="PeptideAtlas" id="A2CE44"/>
<dbReference type="ProteomicsDB" id="275249"/>
<dbReference type="Ensembl" id="ENSMUST00000101388.4">
    <property type="protein sequence ID" value="ENSMUSP00000100524.2"/>
    <property type="gene ID" value="ENSMUSG00000073062.4"/>
</dbReference>
<dbReference type="GeneID" id="668166"/>
<dbReference type="KEGG" id="mmu:668166"/>
<dbReference type="UCSC" id="uc009ttq.1">
    <property type="organism name" value="mouse"/>
</dbReference>
<dbReference type="AGR" id="MGI:3694898"/>
<dbReference type="CTD" id="158586"/>
<dbReference type="MGI" id="MGI:3694898">
    <property type="gene designation" value="Zxdb"/>
</dbReference>
<dbReference type="VEuPathDB" id="HostDB:ENSMUSG00000073062"/>
<dbReference type="eggNOG" id="KOG1721">
    <property type="taxonomic scope" value="Eukaryota"/>
</dbReference>
<dbReference type="GeneTree" id="ENSGT00940000162988"/>
<dbReference type="HOGENOM" id="CLU_007312_0_0_1"/>
<dbReference type="InParanoid" id="A2CE44"/>
<dbReference type="OMA" id="DWNVHPD"/>
<dbReference type="OrthoDB" id="6277246at2759"/>
<dbReference type="PhylomeDB" id="A2CE44"/>
<dbReference type="TreeFam" id="TF330996"/>
<dbReference type="BioGRID-ORCS" id="668166">
    <property type="hits" value="5 hits in 74 CRISPR screens"/>
</dbReference>
<dbReference type="PRO" id="PR:A2CE44"/>
<dbReference type="Proteomes" id="UP000000589">
    <property type="component" value="Chromosome X"/>
</dbReference>
<dbReference type="RNAct" id="A2CE44">
    <property type="molecule type" value="protein"/>
</dbReference>
<dbReference type="Bgee" id="ENSMUSG00000073062">
    <property type="expression patterns" value="Expressed in caudate-putamen and 221 other cell types or tissues"/>
</dbReference>
<dbReference type="GO" id="GO:0005634">
    <property type="term" value="C:nucleus"/>
    <property type="evidence" value="ECO:0007669"/>
    <property type="project" value="UniProtKB-SubCell"/>
</dbReference>
<dbReference type="GO" id="GO:0070742">
    <property type="term" value="F:C2H2 zinc finger domain binding"/>
    <property type="evidence" value="ECO:0000250"/>
    <property type="project" value="UniProtKB"/>
</dbReference>
<dbReference type="GO" id="GO:0003713">
    <property type="term" value="F:transcription coactivator activity"/>
    <property type="evidence" value="ECO:0000250"/>
    <property type="project" value="UniProtKB"/>
</dbReference>
<dbReference type="GO" id="GO:0008270">
    <property type="term" value="F:zinc ion binding"/>
    <property type="evidence" value="ECO:0007669"/>
    <property type="project" value="UniProtKB-KW"/>
</dbReference>
<dbReference type="GO" id="GO:0045893">
    <property type="term" value="P:positive regulation of DNA-templated transcription"/>
    <property type="evidence" value="ECO:0000250"/>
    <property type="project" value="UniProtKB"/>
</dbReference>
<dbReference type="FunFam" id="3.30.160.60:FF:000543">
    <property type="entry name" value="Zinc finger protein 384 like"/>
    <property type="match status" value="1"/>
</dbReference>
<dbReference type="FunFam" id="3.30.160.60:FF:001568">
    <property type="entry name" value="Zinc finger X-linked protein ZXDB"/>
    <property type="match status" value="1"/>
</dbReference>
<dbReference type="FunFam" id="3.30.160.60:FF:000872">
    <property type="entry name" value="zinc finger X-linked protein ZXDB"/>
    <property type="match status" value="1"/>
</dbReference>
<dbReference type="FunFam" id="3.30.160.60:FF:000257">
    <property type="entry name" value="ZXD family zinc finger C"/>
    <property type="match status" value="3"/>
</dbReference>
<dbReference type="FunFam" id="3.30.160.60:FF:000499">
    <property type="entry name" value="ZXD family zinc finger C"/>
    <property type="match status" value="1"/>
</dbReference>
<dbReference type="FunFam" id="3.30.160.60:FF:001192">
    <property type="entry name" value="ZXD family zinc finger C"/>
    <property type="match status" value="1"/>
</dbReference>
<dbReference type="Gene3D" id="3.30.160.60">
    <property type="entry name" value="Classic Zinc Finger"/>
    <property type="match status" value="9"/>
</dbReference>
<dbReference type="InterPro" id="IPR051061">
    <property type="entry name" value="Zinc_finger_trans_reg"/>
</dbReference>
<dbReference type="InterPro" id="IPR036236">
    <property type="entry name" value="Znf_C2H2_sf"/>
</dbReference>
<dbReference type="InterPro" id="IPR013087">
    <property type="entry name" value="Znf_C2H2_type"/>
</dbReference>
<dbReference type="PANTHER" id="PTHR46179">
    <property type="entry name" value="ZINC FINGER PROTEIN"/>
    <property type="match status" value="1"/>
</dbReference>
<dbReference type="PANTHER" id="PTHR46179:SF6">
    <property type="entry name" value="ZINC FINGER X-LINKED PROTEIN ZXDA"/>
    <property type="match status" value="1"/>
</dbReference>
<dbReference type="Pfam" id="PF00096">
    <property type="entry name" value="zf-C2H2"/>
    <property type="match status" value="5"/>
</dbReference>
<dbReference type="SMART" id="SM00355">
    <property type="entry name" value="ZnF_C2H2"/>
    <property type="match status" value="10"/>
</dbReference>
<dbReference type="SUPFAM" id="SSF57667">
    <property type="entry name" value="beta-beta-alpha zinc fingers"/>
    <property type="match status" value="5"/>
</dbReference>
<dbReference type="PROSITE" id="PS00028">
    <property type="entry name" value="ZINC_FINGER_C2H2_1"/>
    <property type="match status" value="10"/>
</dbReference>
<dbReference type="PROSITE" id="PS50157">
    <property type="entry name" value="ZINC_FINGER_C2H2_2"/>
    <property type="match status" value="10"/>
</dbReference>
<proteinExistence type="evidence at protein level"/>
<organism>
    <name type="scientific">Mus musculus</name>
    <name type="common">Mouse</name>
    <dbReference type="NCBI Taxonomy" id="10090"/>
    <lineage>
        <taxon>Eukaryota</taxon>
        <taxon>Metazoa</taxon>
        <taxon>Chordata</taxon>
        <taxon>Craniata</taxon>
        <taxon>Vertebrata</taxon>
        <taxon>Euteleostomi</taxon>
        <taxon>Mammalia</taxon>
        <taxon>Eutheria</taxon>
        <taxon>Euarchontoglires</taxon>
        <taxon>Glires</taxon>
        <taxon>Rodentia</taxon>
        <taxon>Myomorpha</taxon>
        <taxon>Muroidea</taxon>
        <taxon>Muridae</taxon>
        <taxon>Murinae</taxon>
        <taxon>Mus</taxon>
        <taxon>Mus</taxon>
    </lineage>
</organism>
<protein>
    <recommendedName>
        <fullName>Zinc finger X-linked protein ZXDB</fullName>
    </recommendedName>
</protein>
<comment type="function">
    <text evidence="1">Cooperates with CIITA to promote transcription of MHC class I and MHC class II genes.</text>
</comment>
<comment type="subunit">
    <text evidence="1">Self-associates. Interacts with ZXDC and CIITA (By similarity).</text>
</comment>
<comment type="subcellular location">
    <subcellularLocation>
        <location evidence="4">Nucleus</location>
    </subcellularLocation>
</comment>
<comment type="similarity">
    <text evidence="4">Belongs to the ZXD family.</text>
</comment>
<comment type="sequence caution" evidence="4">
    <conflict type="frameshift">
        <sequence resource="EMBL-CDS" id="BAC25496"/>
    </conflict>
</comment>
<reference key="1">
    <citation type="journal article" date="2009" name="PLoS Biol.">
        <title>Lineage-specific biology revealed by a finished genome assembly of the mouse.</title>
        <authorList>
            <person name="Church D.M."/>
            <person name="Goodstadt L."/>
            <person name="Hillier L.W."/>
            <person name="Zody M.C."/>
            <person name="Goldstein S."/>
            <person name="She X."/>
            <person name="Bult C.J."/>
            <person name="Agarwala R."/>
            <person name="Cherry J.L."/>
            <person name="DiCuccio M."/>
            <person name="Hlavina W."/>
            <person name="Kapustin Y."/>
            <person name="Meric P."/>
            <person name="Maglott D."/>
            <person name="Birtle Z."/>
            <person name="Marques A.C."/>
            <person name="Graves T."/>
            <person name="Zhou S."/>
            <person name="Teague B."/>
            <person name="Potamousis K."/>
            <person name="Churas C."/>
            <person name="Place M."/>
            <person name="Herschleb J."/>
            <person name="Runnheim R."/>
            <person name="Forrest D."/>
            <person name="Amos-Landgraf J."/>
            <person name="Schwartz D.C."/>
            <person name="Cheng Z."/>
            <person name="Lindblad-Toh K."/>
            <person name="Eichler E.E."/>
            <person name="Ponting C.P."/>
        </authorList>
    </citation>
    <scope>NUCLEOTIDE SEQUENCE [LARGE SCALE GENOMIC DNA]</scope>
    <source>
        <strain>C57BL/6J</strain>
    </source>
</reference>
<reference key="2">
    <citation type="journal article" date="2005" name="Science">
        <title>The transcriptional landscape of the mammalian genome.</title>
        <authorList>
            <person name="Carninci P."/>
            <person name="Kasukawa T."/>
            <person name="Katayama S."/>
            <person name="Gough J."/>
            <person name="Frith M.C."/>
            <person name="Maeda N."/>
            <person name="Oyama R."/>
            <person name="Ravasi T."/>
            <person name="Lenhard B."/>
            <person name="Wells C."/>
            <person name="Kodzius R."/>
            <person name="Shimokawa K."/>
            <person name="Bajic V.B."/>
            <person name="Brenner S.E."/>
            <person name="Batalov S."/>
            <person name="Forrest A.R."/>
            <person name="Zavolan M."/>
            <person name="Davis M.J."/>
            <person name="Wilming L.G."/>
            <person name="Aidinis V."/>
            <person name="Allen J.E."/>
            <person name="Ambesi-Impiombato A."/>
            <person name="Apweiler R."/>
            <person name="Aturaliya R.N."/>
            <person name="Bailey T.L."/>
            <person name="Bansal M."/>
            <person name="Baxter L."/>
            <person name="Beisel K.W."/>
            <person name="Bersano T."/>
            <person name="Bono H."/>
            <person name="Chalk A.M."/>
            <person name="Chiu K.P."/>
            <person name="Choudhary V."/>
            <person name="Christoffels A."/>
            <person name="Clutterbuck D.R."/>
            <person name="Crowe M.L."/>
            <person name="Dalla E."/>
            <person name="Dalrymple B.P."/>
            <person name="de Bono B."/>
            <person name="Della Gatta G."/>
            <person name="di Bernardo D."/>
            <person name="Down T."/>
            <person name="Engstrom P."/>
            <person name="Fagiolini M."/>
            <person name="Faulkner G."/>
            <person name="Fletcher C.F."/>
            <person name="Fukushima T."/>
            <person name="Furuno M."/>
            <person name="Futaki S."/>
            <person name="Gariboldi M."/>
            <person name="Georgii-Hemming P."/>
            <person name="Gingeras T.R."/>
            <person name="Gojobori T."/>
            <person name="Green R.E."/>
            <person name="Gustincich S."/>
            <person name="Harbers M."/>
            <person name="Hayashi Y."/>
            <person name="Hensch T.K."/>
            <person name="Hirokawa N."/>
            <person name="Hill D."/>
            <person name="Huminiecki L."/>
            <person name="Iacono M."/>
            <person name="Ikeo K."/>
            <person name="Iwama A."/>
            <person name="Ishikawa T."/>
            <person name="Jakt M."/>
            <person name="Kanapin A."/>
            <person name="Katoh M."/>
            <person name="Kawasawa Y."/>
            <person name="Kelso J."/>
            <person name="Kitamura H."/>
            <person name="Kitano H."/>
            <person name="Kollias G."/>
            <person name="Krishnan S.P."/>
            <person name="Kruger A."/>
            <person name="Kummerfeld S.K."/>
            <person name="Kurochkin I.V."/>
            <person name="Lareau L.F."/>
            <person name="Lazarevic D."/>
            <person name="Lipovich L."/>
            <person name="Liu J."/>
            <person name="Liuni S."/>
            <person name="McWilliam S."/>
            <person name="Madan Babu M."/>
            <person name="Madera M."/>
            <person name="Marchionni L."/>
            <person name="Matsuda H."/>
            <person name="Matsuzawa S."/>
            <person name="Miki H."/>
            <person name="Mignone F."/>
            <person name="Miyake S."/>
            <person name="Morris K."/>
            <person name="Mottagui-Tabar S."/>
            <person name="Mulder N."/>
            <person name="Nakano N."/>
            <person name="Nakauchi H."/>
            <person name="Ng P."/>
            <person name="Nilsson R."/>
            <person name="Nishiguchi S."/>
            <person name="Nishikawa S."/>
            <person name="Nori F."/>
            <person name="Ohara O."/>
            <person name="Okazaki Y."/>
            <person name="Orlando V."/>
            <person name="Pang K.C."/>
            <person name="Pavan W.J."/>
            <person name="Pavesi G."/>
            <person name="Pesole G."/>
            <person name="Petrovsky N."/>
            <person name="Piazza S."/>
            <person name="Reed J."/>
            <person name="Reid J.F."/>
            <person name="Ring B.Z."/>
            <person name="Ringwald M."/>
            <person name="Rost B."/>
            <person name="Ruan Y."/>
            <person name="Salzberg S.L."/>
            <person name="Sandelin A."/>
            <person name="Schneider C."/>
            <person name="Schoenbach C."/>
            <person name="Sekiguchi K."/>
            <person name="Semple C.A."/>
            <person name="Seno S."/>
            <person name="Sessa L."/>
            <person name="Sheng Y."/>
            <person name="Shibata Y."/>
            <person name="Shimada H."/>
            <person name="Shimada K."/>
            <person name="Silva D."/>
            <person name="Sinclair B."/>
            <person name="Sperling S."/>
            <person name="Stupka E."/>
            <person name="Sugiura K."/>
            <person name="Sultana R."/>
            <person name="Takenaka Y."/>
            <person name="Taki K."/>
            <person name="Tammoja K."/>
            <person name="Tan S.L."/>
            <person name="Tang S."/>
            <person name="Taylor M.S."/>
            <person name="Tegner J."/>
            <person name="Teichmann S.A."/>
            <person name="Ueda H.R."/>
            <person name="van Nimwegen E."/>
            <person name="Verardo R."/>
            <person name="Wei C.L."/>
            <person name="Yagi K."/>
            <person name="Yamanishi H."/>
            <person name="Zabarovsky E."/>
            <person name="Zhu S."/>
            <person name="Zimmer A."/>
            <person name="Hide W."/>
            <person name="Bult C."/>
            <person name="Grimmond S.M."/>
            <person name="Teasdale R.D."/>
            <person name="Liu E.T."/>
            <person name="Brusic V."/>
            <person name="Quackenbush J."/>
            <person name="Wahlestedt C."/>
            <person name="Mattick J.S."/>
            <person name="Hume D.A."/>
            <person name="Kai C."/>
            <person name="Sasaki D."/>
            <person name="Tomaru Y."/>
            <person name="Fukuda S."/>
            <person name="Kanamori-Katayama M."/>
            <person name="Suzuki M."/>
            <person name="Aoki J."/>
            <person name="Arakawa T."/>
            <person name="Iida J."/>
            <person name="Imamura K."/>
            <person name="Itoh M."/>
            <person name="Kato T."/>
            <person name="Kawaji H."/>
            <person name="Kawagashira N."/>
            <person name="Kawashima T."/>
            <person name="Kojima M."/>
            <person name="Kondo S."/>
            <person name="Konno H."/>
            <person name="Nakano K."/>
            <person name="Ninomiya N."/>
            <person name="Nishio T."/>
            <person name="Okada M."/>
            <person name="Plessy C."/>
            <person name="Shibata K."/>
            <person name="Shiraki T."/>
            <person name="Suzuki S."/>
            <person name="Tagami M."/>
            <person name="Waki K."/>
            <person name="Watahiki A."/>
            <person name="Okamura-Oho Y."/>
            <person name="Suzuki H."/>
            <person name="Kawai J."/>
            <person name="Hayashizaki Y."/>
        </authorList>
    </citation>
    <scope>NUCLEOTIDE SEQUENCE [LARGE SCALE MRNA] OF 252-873</scope>
    <source>
        <strain>C57BL/6J</strain>
        <tissue>Head</tissue>
        <tissue>Testis</tissue>
    </source>
</reference>
<reference key="3">
    <citation type="journal article" date="2014" name="Mol. Cell. Proteomics">
        <title>Immunoaffinity enrichment and mass spectrometry analysis of protein methylation.</title>
        <authorList>
            <person name="Guo A."/>
            <person name="Gu H."/>
            <person name="Zhou J."/>
            <person name="Mulhern D."/>
            <person name="Wang Y."/>
            <person name="Lee K.A."/>
            <person name="Yang V."/>
            <person name="Aguiar M."/>
            <person name="Kornhauser J."/>
            <person name="Jia X."/>
            <person name="Ren J."/>
            <person name="Beausoleil S.A."/>
            <person name="Silva J.C."/>
            <person name="Vemulapalli V."/>
            <person name="Bedford M.T."/>
            <person name="Comb M.J."/>
        </authorList>
    </citation>
    <scope>METHYLATION [LARGE SCALE ANALYSIS] AT ARG-89</scope>
    <scope>IDENTIFICATION BY MASS SPECTROMETRY [LARGE SCALE ANALYSIS]</scope>
    <source>
        <tissue>Brain</tissue>
        <tissue>Embryo</tissue>
    </source>
</reference>
<evidence type="ECO:0000250" key="1"/>
<evidence type="ECO:0000255" key="2">
    <source>
        <dbReference type="PROSITE-ProRule" id="PRU00042"/>
    </source>
</evidence>
<evidence type="ECO:0000256" key="3">
    <source>
        <dbReference type="SAM" id="MobiDB-lite"/>
    </source>
</evidence>
<evidence type="ECO:0000305" key="4"/>
<evidence type="ECO:0007744" key="5">
    <source>
    </source>
</evidence>
<name>ZXDB_MOUSE</name>
<accession>A2CE44</accession>
<accession>Q3V1M7</accession>
<accession>Q8CEQ1</accession>